<organism>
    <name type="scientific">Guillardia theta</name>
    <name type="common">Cryptophyte</name>
    <name type="synonym">Cryptomonas phi</name>
    <dbReference type="NCBI Taxonomy" id="55529"/>
    <lineage>
        <taxon>Eukaryota</taxon>
        <taxon>Cryptophyceae</taxon>
        <taxon>Pyrenomonadales</taxon>
        <taxon>Geminigeraceae</taxon>
        <taxon>Guillardia</taxon>
    </lineage>
</organism>
<reference key="1">
    <citation type="journal article" date="2001" name="Nature">
        <title>The highly reduced genome of an enslaved algal nucleus.</title>
        <authorList>
            <person name="Douglas S.E."/>
            <person name="Zauner S."/>
            <person name="Fraunholz M."/>
            <person name="Beaton M."/>
            <person name="Penny S.L."/>
            <person name="Deng L.-T."/>
            <person name="Wu X."/>
            <person name="Reith M.E."/>
            <person name="Cavalier-Smith T."/>
            <person name="Maier U.-G."/>
        </authorList>
    </citation>
    <scope>NUCLEOTIDE SEQUENCE [LARGE SCALE GENOMIC DNA]</scope>
</reference>
<reference key="2">
    <citation type="journal article" date="1999" name="Mol. Biol. Evol.">
        <title>The secondary endosymbiont of the cryptomonad Guillardia theta contains alpha-, beta-, and gamma-tubulin genes.</title>
        <authorList>
            <person name="Keeling P.J."/>
            <person name="Deane J.A."/>
            <person name="Hink-Schauer C."/>
            <person name="Douglas S.E."/>
            <person name="Maier U.-G."/>
            <person name="McFadden G.I."/>
        </authorList>
    </citation>
    <scope>NUCLEOTIDE SEQUENCE [GENOMIC DNA] OF 16-402</scope>
</reference>
<protein>
    <recommendedName>
        <fullName>Tubulin beta chain, nucleomorph</fullName>
    </recommendedName>
    <alternativeName>
        <fullName>Nucleomorph beta-tubulin</fullName>
    </alternativeName>
</protein>
<accession>Q9SEV2</accession>
<accession>Q9ZTL3</accession>
<comment type="function">
    <text>Tubulin is the major constituent of microtubules, a cylinder consisting of laterally associated linear protofilaments composed of alpha- and beta-tubulin heterodimers. Microtubules grow by the addition of GTP-tubulin dimers to the microtubule end, where a stabilizing cap forms. Below the cap, tubulin dimers are in GDP-bound state, owing to GTPase activity of alpha-tubulin.</text>
</comment>
<comment type="cofactor">
    <cofactor evidence="1">
        <name>Mg(2+)</name>
        <dbReference type="ChEBI" id="CHEBI:18420"/>
    </cofactor>
</comment>
<comment type="subunit">
    <text>Dimer of alpha and beta chains. A typical microtubule is a hollow water-filled tube with an outer diameter of 25 nm and an inner diameter of 15 nM. Alpha-beta heterodimers associate head-to-tail to form protofilaments running lengthwise along the microtubule wall with the beta-tubulin subunit facing the microtubule plus end conferring a structural polarity. Microtubules usually have 13 protofilaments but different protofilament numbers can be found in some organisms and specialized cells.</text>
</comment>
<comment type="similarity">
    <text evidence="3">Belongs to the tubulin family.</text>
</comment>
<evidence type="ECO:0000250" key="1">
    <source>
        <dbReference type="UniProtKB" id="P68363"/>
    </source>
</evidence>
<evidence type="ECO:0000250" key="2">
    <source>
        <dbReference type="UniProtKB" id="Q13509"/>
    </source>
</evidence>
<evidence type="ECO:0000305" key="3"/>
<feature type="chain" id="PRO_0000233349" description="Tubulin beta chain, nucleomorph">
    <location>
        <begin position="1"/>
        <end position="441"/>
    </location>
</feature>
<feature type="binding site" evidence="2">
    <location>
        <position position="11"/>
    </location>
    <ligand>
        <name>GTP</name>
        <dbReference type="ChEBI" id="CHEBI:37565"/>
    </ligand>
</feature>
<feature type="binding site" evidence="1">
    <location>
        <position position="69"/>
    </location>
    <ligand>
        <name>GTP</name>
        <dbReference type="ChEBI" id="CHEBI:37565"/>
    </ligand>
</feature>
<feature type="binding site" evidence="1">
    <location>
        <position position="69"/>
    </location>
    <ligand>
        <name>Mg(2+)</name>
        <dbReference type="ChEBI" id="CHEBI:18420"/>
    </ligand>
</feature>
<feature type="binding site" evidence="2">
    <location>
        <position position="138"/>
    </location>
    <ligand>
        <name>GTP</name>
        <dbReference type="ChEBI" id="CHEBI:37565"/>
    </ligand>
</feature>
<feature type="binding site" evidence="2">
    <location>
        <position position="142"/>
    </location>
    <ligand>
        <name>GTP</name>
        <dbReference type="ChEBI" id="CHEBI:37565"/>
    </ligand>
</feature>
<feature type="binding site" evidence="2">
    <location>
        <position position="143"/>
    </location>
    <ligand>
        <name>GTP</name>
        <dbReference type="ChEBI" id="CHEBI:37565"/>
    </ligand>
</feature>
<feature type="binding site" evidence="2">
    <location>
        <position position="144"/>
    </location>
    <ligand>
        <name>GTP</name>
        <dbReference type="ChEBI" id="CHEBI:37565"/>
    </ligand>
</feature>
<feature type="binding site" evidence="2">
    <location>
        <position position="204"/>
    </location>
    <ligand>
        <name>GTP</name>
        <dbReference type="ChEBI" id="CHEBI:37565"/>
    </ligand>
</feature>
<feature type="binding site" evidence="2">
    <location>
        <position position="226"/>
    </location>
    <ligand>
        <name>GTP</name>
        <dbReference type="ChEBI" id="CHEBI:37565"/>
    </ligand>
</feature>
<proteinExistence type="inferred from homology"/>
<sequence>MREIVHVQVGQCGNQIGAKFWEVISHEHGVDTNGTYFGNKDNQIEKIDVYYNEVSGNRFVPRAVLVDLEPGTMDSVRASNYGRLFRPDNFVFGQSGAGNNWAKGHYTEGAELIESAMDIIRKESEQCECLQGFQIAHSLGGGTGSGMGTLLISKIREEYPDRMMCTYSVVPSPKVSDTVVEPYNCTLSIHQLVENADEVFCIDNEALYDICFRTLKLVTPSYGDLNHLVSAVMSGITCSLRFPGQLNADLRKLAVNLVPFPRLHFFMVGFAPLGSRGSQQYRSMTVNDLTQQMFDSKNMMAACDPKNGRYLTAAAYFRGKISTKEVDDQMIEIQNKQSEHFVEWIPHNIKSSVCDIPPKGMKMSAAFIGNSTSIQELFKRVGEQFQAMFRRKAFLHWYTGEGMDEMEFTEAESNMQDLVSEYQQYQDAKMDNDAFEDQDLY</sequence>
<name>TBBN_GUITH</name>
<gene>
    <name type="primary">tubB</name>
    <name type="synonym">btubNM</name>
</gene>
<dbReference type="EMBL" id="AF083031">
    <property type="protein sequence ID" value="AAK39778.1"/>
    <property type="molecule type" value="Genomic_DNA"/>
</dbReference>
<dbReference type="EMBL" id="AF050094">
    <property type="protein sequence ID" value="AAD02573.1"/>
    <property type="molecule type" value="Genomic_DNA"/>
</dbReference>
<dbReference type="PIR" id="E90136">
    <property type="entry name" value="E90136"/>
</dbReference>
<dbReference type="RefSeq" id="XP_001713469.1">
    <property type="nucleotide sequence ID" value="XM_001713417.1"/>
</dbReference>
<dbReference type="SMR" id="Q9SEV2"/>
<dbReference type="GeneID" id="857251"/>
<dbReference type="Proteomes" id="UP000242167">
    <property type="component" value="Chromosome 3"/>
</dbReference>
<dbReference type="GO" id="GO:0005874">
    <property type="term" value="C:microtubule"/>
    <property type="evidence" value="ECO:0007669"/>
    <property type="project" value="UniProtKB-KW"/>
</dbReference>
<dbReference type="GO" id="GO:0005525">
    <property type="term" value="F:GTP binding"/>
    <property type="evidence" value="ECO:0007669"/>
    <property type="project" value="UniProtKB-KW"/>
</dbReference>
<dbReference type="GO" id="GO:0003924">
    <property type="term" value="F:GTPase activity"/>
    <property type="evidence" value="ECO:0007669"/>
    <property type="project" value="InterPro"/>
</dbReference>
<dbReference type="GO" id="GO:0046872">
    <property type="term" value="F:metal ion binding"/>
    <property type="evidence" value="ECO:0007669"/>
    <property type="project" value="UniProtKB-KW"/>
</dbReference>
<dbReference type="GO" id="GO:0005200">
    <property type="term" value="F:structural constituent of cytoskeleton"/>
    <property type="evidence" value="ECO:0007669"/>
    <property type="project" value="InterPro"/>
</dbReference>
<dbReference type="GO" id="GO:0007017">
    <property type="term" value="P:microtubule-based process"/>
    <property type="evidence" value="ECO:0007669"/>
    <property type="project" value="InterPro"/>
</dbReference>
<dbReference type="CDD" id="cd02187">
    <property type="entry name" value="beta_tubulin"/>
    <property type="match status" value="1"/>
</dbReference>
<dbReference type="FunFam" id="1.10.287.600:FF:000002">
    <property type="entry name" value="Tubulin beta chain"/>
    <property type="match status" value="1"/>
</dbReference>
<dbReference type="FunFam" id="3.30.1330.20:FF:000002">
    <property type="entry name" value="Tubulin beta chain"/>
    <property type="match status" value="1"/>
</dbReference>
<dbReference type="FunFam" id="3.40.50.1440:FF:000006">
    <property type="entry name" value="Tubulin beta chain"/>
    <property type="match status" value="1"/>
</dbReference>
<dbReference type="Gene3D" id="1.10.287.600">
    <property type="entry name" value="Helix hairpin bin"/>
    <property type="match status" value="1"/>
</dbReference>
<dbReference type="Gene3D" id="3.30.1330.20">
    <property type="entry name" value="Tubulin/FtsZ, C-terminal domain"/>
    <property type="match status" value="1"/>
</dbReference>
<dbReference type="Gene3D" id="3.40.50.1440">
    <property type="entry name" value="Tubulin/FtsZ, GTPase domain"/>
    <property type="match status" value="1"/>
</dbReference>
<dbReference type="InterPro" id="IPR013838">
    <property type="entry name" value="Beta-tubulin_BS"/>
</dbReference>
<dbReference type="InterPro" id="IPR002453">
    <property type="entry name" value="Beta_tubulin"/>
</dbReference>
<dbReference type="InterPro" id="IPR008280">
    <property type="entry name" value="Tub_FtsZ_C"/>
</dbReference>
<dbReference type="InterPro" id="IPR000217">
    <property type="entry name" value="Tubulin"/>
</dbReference>
<dbReference type="InterPro" id="IPR037103">
    <property type="entry name" value="Tubulin/FtsZ-like_C"/>
</dbReference>
<dbReference type="InterPro" id="IPR018316">
    <property type="entry name" value="Tubulin/FtsZ_2-layer-sand-dom"/>
</dbReference>
<dbReference type="InterPro" id="IPR036525">
    <property type="entry name" value="Tubulin/FtsZ_GTPase_sf"/>
</dbReference>
<dbReference type="InterPro" id="IPR023123">
    <property type="entry name" value="Tubulin_C"/>
</dbReference>
<dbReference type="InterPro" id="IPR017975">
    <property type="entry name" value="Tubulin_CS"/>
</dbReference>
<dbReference type="InterPro" id="IPR003008">
    <property type="entry name" value="Tubulin_FtsZ_GTPase"/>
</dbReference>
<dbReference type="PANTHER" id="PTHR11588">
    <property type="entry name" value="TUBULIN"/>
    <property type="match status" value="1"/>
</dbReference>
<dbReference type="Pfam" id="PF00091">
    <property type="entry name" value="Tubulin"/>
    <property type="match status" value="1"/>
</dbReference>
<dbReference type="Pfam" id="PF03953">
    <property type="entry name" value="Tubulin_C"/>
    <property type="match status" value="1"/>
</dbReference>
<dbReference type="PRINTS" id="PR01163">
    <property type="entry name" value="BETATUBULIN"/>
</dbReference>
<dbReference type="PRINTS" id="PR01161">
    <property type="entry name" value="TUBULIN"/>
</dbReference>
<dbReference type="SMART" id="SM00864">
    <property type="entry name" value="Tubulin"/>
    <property type="match status" value="1"/>
</dbReference>
<dbReference type="SMART" id="SM00865">
    <property type="entry name" value="Tubulin_C"/>
    <property type="match status" value="1"/>
</dbReference>
<dbReference type="SUPFAM" id="SSF55307">
    <property type="entry name" value="Tubulin C-terminal domain-like"/>
    <property type="match status" value="1"/>
</dbReference>
<dbReference type="SUPFAM" id="SSF52490">
    <property type="entry name" value="Tubulin nucleotide-binding domain-like"/>
    <property type="match status" value="1"/>
</dbReference>
<dbReference type="PROSITE" id="PS00227">
    <property type="entry name" value="TUBULIN"/>
    <property type="match status" value="1"/>
</dbReference>
<dbReference type="PROSITE" id="PS00228">
    <property type="entry name" value="TUBULIN_B_AUTOREG"/>
    <property type="match status" value="1"/>
</dbReference>
<geneLocation type="nucleomorph"/>
<keyword id="KW-0342">GTP-binding</keyword>
<keyword id="KW-0460">Magnesium</keyword>
<keyword id="KW-0479">Metal-binding</keyword>
<keyword id="KW-0493">Microtubule</keyword>
<keyword id="KW-0547">Nucleotide-binding</keyword>